<comment type="similarity">
    <text evidence="1">Belongs to the bacterial ribosomal protein bL28 family.</text>
</comment>
<feature type="chain" id="PRO_1000195942" description="Large ribosomal subunit protein bL28">
    <location>
        <begin position="1"/>
        <end position="62"/>
    </location>
</feature>
<reference key="1">
    <citation type="journal article" date="2009" name="J. Bacteriol.">
        <title>Role of conjugative elements in the evolution of the multidrug-resistant pandemic clone Streptococcus pneumoniae Spain23F ST81.</title>
        <authorList>
            <person name="Croucher N.J."/>
            <person name="Walker D."/>
            <person name="Romero P."/>
            <person name="Lennard N."/>
            <person name="Paterson G.K."/>
            <person name="Bason N.C."/>
            <person name="Mitchell A.M."/>
            <person name="Quail M.A."/>
            <person name="Andrew P.W."/>
            <person name="Parkhill J."/>
            <person name="Bentley S.D."/>
            <person name="Mitchell T.J."/>
        </authorList>
    </citation>
    <scope>NUCLEOTIDE SEQUENCE [LARGE SCALE GENOMIC DNA]</scope>
    <source>
        <strain>ATCC 700669 / Spain 23F-1</strain>
    </source>
</reference>
<accession>B8ZLK5</accession>
<sequence>MAKVCYFTGRKTVSGNNRSHAMNQTKRAVKPNLQKVTVLIDGKPKKVWASARALKSGKVERV</sequence>
<dbReference type="EMBL" id="FM211187">
    <property type="protein sequence ID" value="CAR68263.1"/>
    <property type="molecule type" value="Genomic_DNA"/>
</dbReference>
<dbReference type="RefSeq" id="WP_001140948.1">
    <property type="nucleotide sequence ID" value="NC_011900.1"/>
</dbReference>
<dbReference type="SMR" id="B8ZLK5"/>
<dbReference type="GeneID" id="93921138"/>
<dbReference type="KEGG" id="sne:SPN23F04140"/>
<dbReference type="HOGENOM" id="CLU_064548_7_1_9"/>
<dbReference type="GO" id="GO:1990904">
    <property type="term" value="C:ribonucleoprotein complex"/>
    <property type="evidence" value="ECO:0007669"/>
    <property type="project" value="UniProtKB-KW"/>
</dbReference>
<dbReference type="GO" id="GO:0005840">
    <property type="term" value="C:ribosome"/>
    <property type="evidence" value="ECO:0007669"/>
    <property type="project" value="UniProtKB-KW"/>
</dbReference>
<dbReference type="GO" id="GO:0003735">
    <property type="term" value="F:structural constituent of ribosome"/>
    <property type="evidence" value="ECO:0007669"/>
    <property type="project" value="InterPro"/>
</dbReference>
<dbReference type="GO" id="GO:0006412">
    <property type="term" value="P:translation"/>
    <property type="evidence" value="ECO:0007669"/>
    <property type="project" value="UniProtKB-UniRule"/>
</dbReference>
<dbReference type="Gene3D" id="2.30.170.40">
    <property type="entry name" value="Ribosomal protein L28/L24"/>
    <property type="match status" value="1"/>
</dbReference>
<dbReference type="HAMAP" id="MF_00373">
    <property type="entry name" value="Ribosomal_bL28"/>
    <property type="match status" value="1"/>
</dbReference>
<dbReference type="InterPro" id="IPR050096">
    <property type="entry name" value="Bacterial_rp_bL28"/>
</dbReference>
<dbReference type="InterPro" id="IPR026569">
    <property type="entry name" value="Ribosomal_bL28"/>
</dbReference>
<dbReference type="InterPro" id="IPR034704">
    <property type="entry name" value="Ribosomal_bL28/bL31-like_sf"/>
</dbReference>
<dbReference type="InterPro" id="IPR001383">
    <property type="entry name" value="Ribosomal_bL28_bact-type"/>
</dbReference>
<dbReference type="InterPro" id="IPR037147">
    <property type="entry name" value="Ribosomal_bL28_sf"/>
</dbReference>
<dbReference type="NCBIfam" id="TIGR00009">
    <property type="entry name" value="L28"/>
    <property type="match status" value="1"/>
</dbReference>
<dbReference type="PANTHER" id="PTHR39080">
    <property type="entry name" value="50S RIBOSOMAL PROTEIN L28"/>
    <property type="match status" value="1"/>
</dbReference>
<dbReference type="PANTHER" id="PTHR39080:SF1">
    <property type="entry name" value="LARGE RIBOSOMAL SUBUNIT PROTEIN BL28A"/>
    <property type="match status" value="1"/>
</dbReference>
<dbReference type="Pfam" id="PF00830">
    <property type="entry name" value="Ribosomal_L28"/>
    <property type="match status" value="1"/>
</dbReference>
<dbReference type="SUPFAM" id="SSF143800">
    <property type="entry name" value="L28p-like"/>
    <property type="match status" value="1"/>
</dbReference>
<gene>
    <name evidence="1" type="primary">rpmB</name>
    <name type="ordered locus">SPN23F04140</name>
</gene>
<name>RL28_STRPJ</name>
<keyword id="KW-0687">Ribonucleoprotein</keyword>
<keyword id="KW-0689">Ribosomal protein</keyword>
<proteinExistence type="inferred from homology"/>
<evidence type="ECO:0000255" key="1">
    <source>
        <dbReference type="HAMAP-Rule" id="MF_00373"/>
    </source>
</evidence>
<evidence type="ECO:0000305" key="2"/>
<organism>
    <name type="scientific">Streptococcus pneumoniae (strain ATCC 700669 / Spain 23F-1)</name>
    <dbReference type="NCBI Taxonomy" id="561276"/>
    <lineage>
        <taxon>Bacteria</taxon>
        <taxon>Bacillati</taxon>
        <taxon>Bacillota</taxon>
        <taxon>Bacilli</taxon>
        <taxon>Lactobacillales</taxon>
        <taxon>Streptococcaceae</taxon>
        <taxon>Streptococcus</taxon>
    </lineage>
</organism>
<protein>
    <recommendedName>
        <fullName evidence="1">Large ribosomal subunit protein bL28</fullName>
    </recommendedName>
    <alternativeName>
        <fullName evidence="2">50S ribosomal protein L28</fullName>
    </alternativeName>
</protein>